<accession>B5Y256</accession>
<comment type="function">
    <text evidence="1">This protein is involved in control of the biosynthesis of threonine.</text>
</comment>
<comment type="similarity">
    <text evidence="1">Belongs to the thr operon leader peptide family.</text>
</comment>
<name>LPT_KLEP3</name>
<feature type="peptide" id="PRO_1000188780" description="thr operon leader peptide">
    <location>
        <begin position="1"/>
        <end position="22"/>
    </location>
</feature>
<proteinExistence type="inferred from homology"/>
<organism>
    <name type="scientific">Klebsiella pneumoniae (strain 342)</name>
    <dbReference type="NCBI Taxonomy" id="507522"/>
    <lineage>
        <taxon>Bacteria</taxon>
        <taxon>Pseudomonadati</taxon>
        <taxon>Pseudomonadota</taxon>
        <taxon>Gammaproteobacteria</taxon>
        <taxon>Enterobacterales</taxon>
        <taxon>Enterobacteriaceae</taxon>
        <taxon>Klebsiella/Raoultella group</taxon>
        <taxon>Klebsiella</taxon>
        <taxon>Klebsiella pneumoniae complex</taxon>
    </lineage>
</organism>
<reference key="1">
    <citation type="journal article" date="2008" name="PLoS Genet.">
        <title>Complete genome sequence of the N2-fixing broad host range endophyte Klebsiella pneumoniae 342 and virulence predictions verified in mice.</title>
        <authorList>
            <person name="Fouts D.E."/>
            <person name="Tyler H.L."/>
            <person name="DeBoy R.T."/>
            <person name="Daugherty S."/>
            <person name="Ren Q."/>
            <person name="Badger J.H."/>
            <person name="Durkin A.S."/>
            <person name="Huot H."/>
            <person name="Shrivastava S."/>
            <person name="Kothari S."/>
            <person name="Dodson R.J."/>
            <person name="Mohamoud Y."/>
            <person name="Khouri H."/>
            <person name="Roesch L.F.W."/>
            <person name="Krogfelt K.A."/>
            <person name="Struve C."/>
            <person name="Triplett E.W."/>
            <person name="Methe B.A."/>
        </authorList>
    </citation>
    <scope>NUCLEOTIDE SEQUENCE [LARGE SCALE GENOMIC DNA]</scope>
    <source>
        <strain>342</strain>
    </source>
</reference>
<sequence length="22" mass="2238">MNRIGMITTIITTTITTGNGAG</sequence>
<evidence type="ECO:0000255" key="1">
    <source>
        <dbReference type="HAMAP-Rule" id="MF_01907"/>
    </source>
</evidence>
<dbReference type="EMBL" id="CP000964">
    <property type="protein sequence ID" value="ACI11826.1"/>
    <property type="molecule type" value="Genomic_DNA"/>
</dbReference>
<dbReference type="KEGG" id="kpe:KPK_4756"/>
<dbReference type="HOGENOM" id="CLU_221491_1_0_6"/>
<dbReference type="Proteomes" id="UP000001734">
    <property type="component" value="Chromosome"/>
</dbReference>
<dbReference type="GO" id="GO:0009088">
    <property type="term" value="P:threonine biosynthetic process"/>
    <property type="evidence" value="ECO:0007669"/>
    <property type="project" value="UniProtKB-UniRule"/>
</dbReference>
<dbReference type="GO" id="GO:0031556">
    <property type="term" value="P:transcriptional attenuation by ribosome"/>
    <property type="evidence" value="ECO:0007669"/>
    <property type="project" value="UniProtKB-UniRule"/>
</dbReference>
<dbReference type="HAMAP" id="MF_01907">
    <property type="entry name" value="Leader_Thr"/>
    <property type="match status" value="1"/>
</dbReference>
<dbReference type="InterPro" id="IPR011720">
    <property type="entry name" value="Thr_lead_pept"/>
</dbReference>
<dbReference type="NCBIfam" id="TIGR02077">
    <property type="entry name" value="thr_lead_pep"/>
    <property type="match status" value="1"/>
</dbReference>
<dbReference type="Pfam" id="PF08254">
    <property type="entry name" value="Leader_Thr"/>
    <property type="match status" value="1"/>
</dbReference>
<keyword id="KW-0028">Amino-acid biosynthesis</keyword>
<keyword id="KW-0428">Leader peptide</keyword>
<keyword id="KW-0791">Threonine biosynthesis</keyword>
<gene>
    <name evidence="1" type="primary">thrL</name>
    <name type="ordered locus">KPK_4756</name>
</gene>
<protein>
    <recommendedName>
        <fullName evidence="1">thr operon leader peptide</fullName>
    </recommendedName>
    <alternativeName>
        <fullName evidence="1">thr operon attenuator</fullName>
    </alternativeName>
</protein>